<evidence type="ECO:0000250" key="1"/>
<evidence type="ECO:0000255" key="2">
    <source>
        <dbReference type="PROSITE-ProRule" id="PRU00277"/>
    </source>
</evidence>
<evidence type="ECO:0000305" key="3"/>
<protein>
    <recommendedName>
        <fullName>FKBP-type peptidyl-prolyl cis-trans isomerase SlyD</fullName>
        <shortName>PPIase</shortName>
        <ecNumber>5.2.1.8</ecNumber>
    </recommendedName>
    <alternativeName>
        <fullName>Metallochaperone SlyD</fullName>
    </alternativeName>
</protein>
<sequence length="212" mass="22430">MKVAPLSVVTLEYTVTDEHGEVIDTTVGKEPLVYLHGTRYLVSGLEAELEGRSVGEAFDVTLTPEQAYGQYDENLVQEVPGELFDGMEVSEGDTFVAETDDGHRPVTVIEVSEEFVKVDGNHPLAGVTLGFKVEIKDVRAATAEELAHGHVHGAGGCGHDHGHDHDHDHGHEHGGYCGGGHHGHDHGHDHGDDHGHGGCCGGGGCGAKGHQH</sequence>
<accession>O07046</accession>
<dbReference type="EC" id="5.2.1.8"/>
<dbReference type="EMBL" id="U56832">
    <property type="protein sequence ID" value="AAC45359.1"/>
    <property type="molecule type" value="Genomic_DNA"/>
</dbReference>
<dbReference type="SMR" id="O07046"/>
<dbReference type="eggNOG" id="COG1047">
    <property type="taxonomic scope" value="Bacteria"/>
</dbReference>
<dbReference type="GO" id="GO:0005737">
    <property type="term" value="C:cytoplasm"/>
    <property type="evidence" value="ECO:0007669"/>
    <property type="project" value="UniProtKB-SubCell"/>
</dbReference>
<dbReference type="GO" id="GO:0046872">
    <property type="term" value="F:metal ion binding"/>
    <property type="evidence" value="ECO:0007669"/>
    <property type="project" value="UniProtKB-KW"/>
</dbReference>
<dbReference type="GO" id="GO:0003755">
    <property type="term" value="F:peptidyl-prolyl cis-trans isomerase activity"/>
    <property type="evidence" value="ECO:0007669"/>
    <property type="project" value="UniProtKB-KW"/>
</dbReference>
<dbReference type="GO" id="GO:0042026">
    <property type="term" value="P:protein refolding"/>
    <property type="evidence" value="ECO:0007669"/>
    <property type="project" value="UniProtKB-ARBA"/>
</dbReference>
<dbReference type="Gene3D" id="2.40.10.330">
    <property type="match status" value="1"/>
</dbReference>
<dbReference type="Gene3D" id="3.10.50.40">
    <property type="match status" value="1"/>
</dbReference>
<dbReference type="InterPro" id="IPR046357">
    <property type="entry name" value="PPIase_dom_sf"/>
</dbReference>
<dbReference type="InterPro" id="IPR001179">
    <property type="entry name" value="PPIase_FKBP_dom"/>
</dbReference>
<dbReference type="InterPro" id="IPR048261">
    <property type="entry name" value="SlpA/SlyD-like_ins_sf"/>
</dbReference>
<dbReference type="PANTHER" id="PTHR47861">
    <property type="entry name" value="FKBP-TYPE PEPTIDYL-PROLYL CIS-TRANS ISOMERASE SLYD"/>
    <property type="match status" value="1"/>
</dbReference>
<dbReference type="PANTHER" id="PTHR47861:SF3">
    <property type="entry name" value="FKBP-TYPE PEPTIDYL-PROLYL CIS-TRANS ISOMERASE SLYD"/>
    <property type="match status" value="1"/>
</dbReference>
<dbReference type="Pfam" id="PF00254">
    <property type="entry name" value="FKBP_C"/>
    <property type="match status" value="1"/>
</dbReference>
<dbReference type="SUPFAM" id="SSF54534">
    <property type="entry name" value="FKBP-like"/>
    <property type="match status" value="1"/>
</dbReference>
<dbReference type="PROSITE" id="PS50059">
    <property type="entry name" value="FKBP_PPIASE"/>
    <property type="match status" value="1"/>
</dbReference>
<proteinExistence type="inferred from homology"/>
<keyword id="KW-0143">Chaperone</keyword>
<keyword id="KW-0963">Cytoplasm</keyword>
<keyword id="KW-0413">Isomerase</keyword>
<keyword id="KW-0479">Metal-binding</keyword>
<keyword id="KW-0533">Nickel</keyword>
<keyword id="KW-0697">Rotamase</keyword>
<name>SLYD_AERHY</name>
<gene>
    <name type="primary">slyD</name>
    <name type="synonym">ilpA</name>
</gene>
<organism>
    <name type="scientific">Aeromonas hydrophila</name>
    <dbReference type="NCBI Taxonomy" id="644"/>
    <lineage>
        <taxon>Bacteria</taxon>
        <taxon>Pseudomonadati</taxon>
        <taxon>Pseudomonadota</taxon>
        <taxon>Gammaproteobacteria</taxon>
        <taxon>Aeromonadales</taxon>
        <taxon>Aeromonadaceae</taxon>
        <taxon>Aeromonas</taxon>
    </lineage>
</organism>
<reference key="1">
    <citation type="journal article" date="1997" name="J. Bacteriol.">
        <title>Cloning and characterization of two immunophilin-like genes, ilpA and fkpA, on a single 3.9-kilobase fragment of Aeromonas hydrophila genomic DNA.</title>
        <authorList>
            <person name="Wong C.Y.F."/>
            <person name="Heuzenroeder M.W."/>
            <person name="Quinn D.M."/>
            <person name="Flower R.L.P."/>
        </authorList>
    </citation>
    <scope>NUCLEOTIDE SEQUENCE [GENOMIC DNA]</scope>
    <source>
        <strain>A6</strain>
    </source>
</reference>
<comment type="function">
    <text evidence="1">Folding helper with both chaperone and peptidyl-prolyl cis-trans isomerase (PPIase) activities. Chaperone activity prevents aggregation of unfolded or partially folded proteins and promotes their correct folding. PPIases catalyze the cis-trans isomerization of Xaa-Pro bonds of peptides, which accelerates slow steps of protein folding and thus shortens the lifetime of intermediates. Both strategies lower the concentration of intermediates and increase the productivity and yield of the folding reaction (By similarity).</text>
</comment>
<comment type="function">
    <text evidence="1">Also involved in hydrogenase metallocenter assembly, probably by participating in the nickel insertion step. This function in hydrogenase biosynthesis requires chaperone activity and the presence of the metal-binding domain, but not PPIase activity (By similarity).</text>
</comment>
<comment type="catalytic activity">
    <reaction>
        <text>[protein]-peptidylproline (omega=180) = [protein]-peptidylproline (omega=0)</text>
        <dbReference type="Rhea" id="RHEA:16237"/>
        <dbReference type="Rhea" id="RHEA-COMP:10747"/>
        <dbReference type="Rhea" id="RHEA-COMP:10748"/>
        <dbReference type="ChEBI" id="CHEBI:83833"/>
        <dbReference type="ChEBI" id="CHEBI:83834"/>
        <dbReference type="EC" id="5.2.1.8"/>
    </reaction>
</comment>
<comment type="subcellular location">
    <subcellularLocation>
        <location evidence="1">Cytoplasm</location>
    </subcellularLocation>
</comment>
<comment type="domain">
    <text evidence="1">The N-terminal region consists of two globular folded domains that contain prolyl isomerase and chaperone activities.</text>
</comment>
<comment type="domain">
    <text evidence="1">The C-terminal region binds nickel ions.</text>
</comment>
<comment type="similarity">
    <text evidence="3">Belongs to the FKBP-type PPIase family.</text>
</comment>
<feature type="chain" id="PRO_0000075363" description="FKBP-type peptidyl-prolyl cis-trans isomerase SlyD">
    <location>
        <begin position="1"/>
        <end position="212"/>
    </location>
</feature>
<feature type="domain" description="PPIase FKBP-type" evidence="2">
    <location>
        <begin position="1"/>
        <end position="94"/>
    </location>
</feature>
<feature type="region of interest" description="PPIase first part" evidence="1">
    <location>
        <begin position="1"/>
        <end position="69"/>
    </location>
</feature>
<feature type="region of interest" description="IF-chaperone" evidence="1">
    <location>
        <begin position="76"/>
        <end position="119"/>
    </location>
</feature>
<feature type="region of interest" description="PPIase second part" evidence="1">
    <location>
        <begin position="128"/>
        <end position="150"/>
    </location>
</feature>